<keyword id="KW-0963">Cytoplasm</keyword>
<keyword id="KW-0488">Methylation</keyword>
<keyword id="KW-0648">Protein biosynthesis</keyword>
<keyword id="KW-1185">Reference proteome</keyword>
<organism>
    <name type="scientific">Geotalea uraniireducens (strain Rf4)</name>
    <name type="common">Geobacter uraniireducens</name>
    <dbReference type="NCBI Taxonomy" id="351605"/>
    <lineage>
        <taxon>Bacteria</taxon>
        <taxon>Pseudomonadati</taxon>
        <taxon>Thermodesulfobacteriota</taxon>
        <taxon>Desulfuromonadia</taxon>
        <taxon>Geobacterales</taxon>
        <taxon>Geobacteraceae</taxon>
        <taxon>Geotalea</taxon>
    </lineage>
</organism>
<dbReference type="EMBL" id="CP000698">
    <property type="protein sequence ID" value="ABQ28205.1"/>
    <property type="molecule type" value="Genomic_DNA"/>
</dbReference>
<dbReference type="RefSeq" id="WP_011940842.1">
    <property type="nucleotide sequence ID" value="NC_009483.1"/>
</dbReference>
<dbReference type="SMR" id="A5G8T7"/>
<dbReference type="STRING" id="351605.Gura_4061"/>
<dbReference type="KEGG" id="gur:Gura_4061"/>
<dbReference type="HOGENOM" id="CLU_036856_0_1_7"/>
<dbReference type="OrthoDB" id="9806673at2"/>
<dbReference type="Proteomes" id="UP000006695">
    <property type="component" value="Chromosome"/>
</dbReference>
<dbReference type="GO" id="GO:0005737">
    <property type="term" value="C:cytoplasm"/>
    <property type="evidence" value="ECO:0007669"/>
    <property type="project" value="UniProtKB-SubCell"/>
</dbReference>
<dbReference type="GO" id="GO:0016149">
    <property type="term" value="F:translation release factor activity, codon specific"/>
    <property type="evidence" value="ECO:0007669"/>
    <property type="project" value="UniProtKB-UniRule"/>
</dbReference>
<dbReference type="FunFam" id="3.30.160.20:FF:000004">
    <property type="entry name" value="Peptide chain release factor 1"/>
    <property type="match status" value="1"/>
</dbReference>
<dbReference type="FunFam" id="3.30.70.1660:FF:000002">
    <property type="entry name" value="Peptide chain release factor 1"/>
    <property type="match status" value="1"/>
</dbReference>
<dbReference type="FunFam" id="3.30.70.1660:FF:000004">
    <property type="entry name" value="Peptide chain release factor 1"/>
    <property type="match status" value="1"/>
</dbReference>
<dbReference type="Gene3D" id="3.30.160.20">
    <property type="match status" value="1"/>
</dbReference>
<dbReference type="Gene3D" id="3.30.70.1660">
    <property type="match status" value="1"/>
</dbReference>
<dbReference type="Gene3D" id="6.10.140.1950">
    <property type="match status" value="1"/>
</dbReference>
<dbReference type="HAMAP" id="MF_00093">
    <property type="entry name" value="Rel_fac_1"/>
    <property type="match status" value="1"/>
</dbReference>
<dbReference type="InterPro" id="IPR005139">
    <property type="entry name" value="PCRF"/>
</dbReference>
<dbReference type="InterPro" id="IPR000352">
    <property type="entry name" value="Pep_chain_release_fac_I"/>
</dbReference>
<dbReference type="InterPro" id="IPR045853">
    <property type="entry name" value="Pep_chain_release_fac_I_sf"/>
</dbReference>
<dbReference type="InterPro" id="IPR050057">
    <property type="entry name" value="Prokaryotic/Mito_RF"/>
</dbReference>
<dbReference type="InterPro" id="IPR004373">
    <property type="entry name" value="RF-1"/>
</dbReference>
<dbReference type="NCBIfam" id="TIGR00019">
    <property type="entry name" value="prfA"/>
    <property type="match status" value="1"/>
</dbReference>
<dbReference type="NCBIfam" id="NF001859">
    <property type="entry name" value="PRK00591.1"/>
    <property type="match status" value="1"/>
</dbReference>
<dbReference type="PANTHER" id="PTHR43804">
    <property type="entry name" value="LD18447P"/>
    <property type="match status" value="1"/>
</dbReference>
<dbReference type="PANTHER" id="PTHR43804:SF7">
    <property type="entry name" value="LD18447P"/>
    <property type="match status" value="1"/>
</dbReference>
<dbReference type="Pfam" id="PF03462">
    <property type="entry name" value="PCRF"/>
    <property type="match status" value="1"/>
</dbReference>
<dbReference type="Pfam" id="PF00472">
    <property type="entry name" value="RF-1"/>
    <property type="match status" value="1"/>
</dbReference>
<dbReference type="SMART" id="SM00937">
    <property type="entry name" value="PCRF"/>
    <property type="match status" value="1"/>
</dbReference>
<dbReference type="SUPFAM" id="SSF75620">
    <property type="entry name" value="Release factor"/>
    <property type="match status" value="1"/>
</dbReference>
<dbReference type="PROSITE" id="PS00745">
    <property type="entry name" value="RF_PROK_I"/>
    <property type="match status" value="1"/>
</dbReference>
<proteinExistence type="inferred from homology"/>
<protein>
    <recommendedName>
        <fullName evidence="1">Peptide chain release factor 1</fullName>
        <shortName evidence="1">RF-1</shortName>
    </recommendedName>
</protein>
<sequence>MFEKIEELERRYQELEALLADPAVLGNQPEFRKLSREHSDLSALVESYRNYKKVLVEITGNRELLADPEMKEMAEAELEALEEQQAALEAEIKLLLLPKDPNDNKSVILEIRAGTGGDEAALFAGDLFRMYGRYAESNRWRVEVISASESEKGGFKEIVASVEGDGVFAKLKYESGTHRVQRVPETEAQGRIHTSACTVAIMPEAEDVDIDINPADLKIDVYRSSGAGGQHVNTTDSAVRITHLPTGTVVACQEERSQIKNRAKAMKVLKTRILDTIMQEQSARLAADRKQQVGSGDRSERIRTYNFPQGRMTDHRIGLTLYRLDAIMAGDIGEITDSLRVYYQMEALKQQSEAA</sequence>
<reference key="1">
    <citation type="submission" date="2007-05" db="EMBL/GenBank/DDBJ databases">
        <title>Complete sequence of Geobacter uraniireducens Rf4.</title>
        <authorList>
            <consortium name="US DOE Joint Genome Institute"/>
            <person name="Copeland A."/>
            <person name="Lucas S."/>
            <person name="Lapidus A."/>
            <person name="Barry K."/>
            <person name="Detter J.C."/>
            <person name="Glavina del Rio T."/>
            <person name="Hammon N."/>
            <person name="Israni S."/>
            <person name="Dalin E."/>
            <person name="Tice H."/>
            <person name="Pitluck S."/>
            <person name="Chertkov O."/>
            <person name="Brettin T."/>
            <person name="Bruce D."/>
            <person name="Han C."/>
            <person name="Schmutz J."/>
            <person name="Larimer F."/>
            <person name="Land M."/>
            <person name="Hauser L."/>
            <person name="Kyrpides N."/>
            <person name="Mikhailova N."/>
            <person name="Shelobolina E."/>
            <person name="Aklujkar M."/>
            <person name="Lovley D."/>
            <person name="Richardson P."/>
        </authorList>
    </citation>
    <scope>NUCLEOTIDE SEQUENCE [LARGE SCALE GENOMIC DNA]</scope>
    <source>
        <strain>ATCC BAA-1134 / JCM 13001 / Rf4</strain>
    </source>
</reference>
<accession>A5G8T7</accession>
<gene>
    <name evidence="1" type="primary">prfA</name>
    <name type="ordered locus">Gura_4061</name>
</gene>
<name>RF1_GEOUR</name>
<evidence type="ECO:0000255" key="1">
    <source>
        <dbReference type="HAMAP-Rule" id="MF_00093"/>
    </source>
</evidence>
<feature type="chain" id="PRO_1000075498" description="Peptide chain release factor 1">
    <location>
        <begin position="1"/>
        <end position="355"/>
    </location>
</feature>
<feature type="modified residue" description="N5-methylglutamine" evidence="1">
    <location>
        <position position="230"/>
    </location>
</feature>
<comment type="function">
    <text evidence="1">Peptide chain release factor 1 directs the termination of translation in response to the peptide chain termination codons UAG and UAA.</text>
</comment>
<comment type="subcellular location">
    <subcellularLocation>
        <location evidence="1">Cytoplasm</location>
    </subcellularLocation>
</comment>
<comment type="PTM">
    <text evidence="1">Methylated by PrmC. Methylation increases the termination efficiency of RF1.</text>
</comment>
<comment type="similarity">
    <text evidence="1">Belongs to the prokaryotic/mitochondrial release factor family.</text>
</comment>